<evidence type="ECO:0000255" key="1">
    <source>
        <dbReference type="HAMAP-Rule" id="MF_01333"/>
    </source>
</evidence>
<evidence type="ECO:0000305" key="2"/>
<proteinExistence type="inferred from homology"/>
<gene>
    <name evidence="1" type="primary">rplE</name>
    <name type="ordered locus">SSA_0119</name>
</gene>
<organism>
    <name type="scientific">Streptococcus sanguinis (strain SK36)</name>
    <dbReference type="NCBI Taxonomy" id="388919"/>
    <lineage>
        <taxon>Bacteria</taxon>
        <taxon>Bacillati</taxon>
        <taxon>Bacillota</taxon>
        <taxon>Bacilli</taxon>
        <taxon>Lactobacillales</taxon>
        <taxon>Streptococcaceae</taxon>
        <taxon>Streptococcus</taxon>
    </lineage>
</organism>
<feature type="chain" id="PRO_1000052845" description="Large ribosomal subunit protein uL5">
    <location>
        <begin position="1"/>
        <end position="180"/>
    </location>
</feature>
<reference key="1">
    <citation type="journal article" date="2007" name="J. Bacteriol.">
        <title>Genome of the opportunistic pathogen Streptococcus sanguinis.</title>
        <authorList>
            <person name="Xu P."/>
            <person name="Alves J.M."/>
            <person name="Kitten T."/>
            <person name="Brown A."/>
            <person name="Chen Z."/>
            <person name="Ozaki L.S."/>
            <person name="Manque P."/>
            <person name="Ge X."/>
            <person name="Serrano M.G."/>
            <person name="Puiu D."/>
            <person name="Hendricks S."/>
            <person name="Wang Y."/>
            <person name="Chaplin M.D."/>
            <person name="Akan D."/>
            <person name="Paik S."/>
            <person name="Peterson D.L."/>
            <person name="Macrina F.L."/>
            <person name="Buck G.A."/>
        </authorList>
    </citation>
    <scope>NUCLEOTIDE SEQUENCE [LARGE SCALE GENOMIC DNA]</scope>
    <source>
        <strain>SK36</strain>
    </source>
</reference>
<protein>
    <recommendedName>
        <fullName evidence="1">Large ribosomal subunit protein uL5</fullName>
    </recommendedName>
    <alternativeName>
        <fullName evidence="2">50S ribosomal protein L5</fullName>
    </alternativeName>
</protein>
<sequence>MANRLKEKYLKEVVPSLTEKFNYSSVMAVPKVDKIVLNMGVGDAVSNAKNLEKAAEELALISGQKPLITKAKKSIAGFRLREGVAIGAKVTLRGERMYEFLDKLVSVSLPRVRDFHGVPTKSFDGRGNYTLGVKEQLIFPEINFDDVDKTRGLDIVIVTTANTDEESRELLTGLGMPFAK</sequence>
<comment type="function">
    <text evidence="1">This is one of the proteins that bind and probably mediate the attachment of the 5S RNA into the large ribosomal subunit, where it forms part of the central protuberance. In the 70S ribosome it contacts protein S13 of the 30S subunit (bridge B1b), connecting the 2 subunits; this bridge is implicated in subunit movement. Contacts the P site tRNA; the 5S rRNA and some of its associated proteins might help stabilize positioning of ribosome-bound tRNAs.</text>
</comment>
<comment type="subunit">
    <text evidence="1">Part of the 50S ribosomal subunit; part of the 5S rRNA/L5/L18/L25 subcomplex. Contacts the 5S rRNA and the P site tRNA. Forms a bridge to the 30S subunit in the 70S ribosome.</text>
</comment>
<comment type="similarity">
    <text evidence="1">Belongs to the universal ribosomal protein uL5 family.</text>
</comment>
<keyword id="KW-1185">Reference proteome</keyword>
<keyword id="KW-0687">Ribonucleoprotein</keyword>
<keyword id="KW-0689">Ribosomal protein</keyword>
<keyword id="KW-0694">RNA-binding</keyword>
<keyword id="KW-0699">rRNA-binding</keyword>
<keyword id="KW-0820">tRNA-binding</keyword>
<dbReference type="EMBL" id="CP000387">
    <property type="protein sequence ID" value="ABN43580.1"/>
    <property type="molecule type" value="Genomic_DNA"/>
</dbReference>
<dbReference type="RefSeq" id="WP_011836336.1">
    <property type="nucleotide sequence ID" value="NC_009009.1"/>
</dbReference>
<dbReference type="RefSeq" id="YP_001034130.1">
    <property type="nucleotide sequence ID" value="NC_009009.1"/>
</dbReference>
<dbReference type="SMR" id="A3CK75"/>
<dbReference type="STRING" id="388919.SSA_0119"/>
<dbReference type="KEGG" id="ssa:SSA_0119"/>
<dbReference type="PATRIC" id="fig|388919.9.peg.112"/>
<dbReference type="eggNOG" id="COG0094">
    <property type="taxonomic scope" value="Bacteria"/>
</dbReference>
<dbReference type="HOGENOM" id="CLU_061015_2_1_9"/>
<dbReference type="OrthoDB" id="9806626at2"/>
<dbReference type="Proteomes" id="UP000002148">
    <property type="component" value="Chromosome"/>
</dbReference>
<dbReference type="GO" id="GO:1990904">
    <property type="term" value="C:ribonucleoprotein complex"/>
    <property type="evidence" value="ECO:0007669"/>
    <property type="project" value="UniProtKB-KW"/>
</dbReference>
<dbReference type="GO" id="GO:0005840">
    <property type="term" value="C:ribosome"/>
    <property type="evidence" value="ECO:0007669"/>
    <property type="project" value="UniProtKB-KW"/>
</dbReference>
<dbReference type="GO" id="GO:0019843">
    <property type="term" value="F:rRNA binding"/>
    <property type="evidence" value="ECO:0007669"/>
    <property type="project" value="UniProtKB-UniRule"/>
</dbReference>
<dbReference type="GO" id="GO:0003735">
    <property type="term" value="F:structural constituent of ribosome"/>
    <property type="evidence" value="ECO:0007669"/>
    <property type="project" value="InterPro"/>
</dbReference>
<dbReference type="GO" id="GO:0000049">
    <property type="term" value="F:tRNA binding"/>
    <property type="evidence" value="ECO:0007669"/>
    <property type="project" value="UniProtKB-UniRule"/>
</dbReference>
<dbReference type="GO" id="GO:0006412">
    <property type="term" value="P:translation"/>
    <property type="evidence" value="ECO:0007669"/>
    <property type="project" value="UniProtKB-UniRule"/>
</dbReference>
<dbReference type="FunFam" id="3.30.1440.10:FF:000001">
    <property type="entry name" value="50S ribosomal protein L5"/>
    <property type="match status" value="1"/>
</dbReference>
<dbReference type="Gene3D" id="3.30.1440.10">
    <property type="match status" value="1"/>
</dbReference>
<dbReference type="HAMAP" id="MF_01333_B">
    <property type="entry name" value="Ribosomal_uL5_B"/>
    <property type="match status" value="1"/>
</dbReference>
<dbReference type="InterPro" id="IPR002132">
    <property type="entry name" value="Ribosomal_uL5"/>
</dbReference>
<dbReference type="InterPro" id="IPR020930">
    <property type="entry name" value="Ribosomal_uL5_bac-type"/>
</dbReference>
<dbReference type="InterPro" id="IPR031309">
    <property type="entry name" value="Ribosomal_uL5_C"/>
</dbReference>
<dbReference type="InterPro" id="IPR020929">
    <property type="entry name" value="Ribosomal_uL5_CS"/>
</dbReference>
<dbReference type="InterPro" id="IPR022803">
    <property type="entry name" value="Ribosomal_uL5_dom_sf"/>
</dbReference>
<dbReference type="InterPro" id="IPR031310">
    <property type="entry name" value="Ribosomal_uL5_N"/>
</dbReference>
<dbReference type="NCBIfam" id="NF000585">
    <property type="entry name" value="PRK00010.1"/>
    <property type="match status" value="1"/>
</dbReference>
<dbReference type="PANTHER" id="PTHR11994">
    <property type="entry name" value="60S RIBOSOMAL PROTEIN L11-RELATED"/>
    <property type="match status" value="1"/>
</dbReference>
<dbReference type="Pfam" id="PF00281">
    <property type="entry name" value="Ribosomal_L5"/>
    <property type="match status" value="1"/>
</dbReference>
<dbReference type="Pfam" id="PF00673">
    <property type="entry name" value="Ribosomal_L5_C"/>
    <property type="match status" value="1"/>
</dbReference>
<dbReference type="PIRSF" id="PIRSF002161">
    <property type="entry name" value="Ribosomal_L5"/>
    <property type="match status" value="1"/>
</dbReference>
<dbReference type="SUPFAM" id="SSF55282">
    <property type="entry name" value="RL5-like"/>
    <property type="match status" value="1"/>
</dbReference>
<dbReference type="PROSITE" id="PS00358">
    <property type="entry name" value="RIBOSOMAL_L5"/>
    <property type="match status" value="1"/>
</dbReference>
<name>RL5_STRSV</name>
<accession>A3CK75</accession>